<proteinExistence type="inferred from homology"/>
<keyword id="KW-0143">Chaperone</keyword>
<keyword id="KW-0963">Cytoplasm</keyword>
<keyword id="KW-0653">Protein transport</keyword>
<keyword id="KW-0811">Translocation</keyword>
<keyword id="KW-0813">Transport</keyword>
<accession>B8E3F6</accession>
<name>SECB_SHEB2</name>
<protein>
    <recommendedName>
        <fullName evidence="1">Protein-export protein SecB</fullName>
    </recommendedName>
</protein>
<organism>
    <name type="scientific">Shewanella baltica (strain OS223)</name>
    <dbReference type="NCBI Taxonomy" id="407976"/>
    <lineage>
        <taxon>Bacteria</taxon>
        <taxon>Pseudomonadati</taxon>
        <taxon>Pseudomonadota</taxon>
        <taxon>Gammaproteobacteria</taxon>
        <taxon>Alteromonadales</taxon>
        <taxon>Shewanellaceae</taxon>
        <taxon>Shewanella</taxon>
    </lineage>
</organism>
<gene>
    <name evidence="1" type="primary">secB</name>
    <name type="ordered locus">Sbal223_0049</name>
</gene>
<reference key="1">
    <citation type="submission" date="2008-12" db="EMBL/GenBank/DDBJ databases">
        <title>Complete sequence of chromosome of Shewanella baltica OS223.</title>
        <authorList>
            <consortium name="US DOE Joint Genome Institute"/>
            <person name="Lucas S."/>
            <person name="Copeland A."/>
            <person name="Lapidus A."/>
            <person name="Glavina del Rio T."/>
            <person name="Dalin E."/>
            <person name="Tice H."/>
            <person name="Bruce D."/>
            <person name="Goodwin L."/>
            <person name="Pitluck S."/>
            <person name="Chertkov O."/>
            <person name="Meincke L."/>
            <person name="Brettin T."/>
            <person name="Detter J.C."/>
            <person name="Han C."/>
            <person name="Kuske C.R."/>
            <person name="Larimer F."/>
            <person name="Land M."/>
            <person name="Hauser L."/>
            <person name="Kyrpides N."/>
            <person name="Ovchinnikova G."/>
            <person name="Brettar I."/>
            <person name="Rodrigues J."/>
            <person name="Konstantinidis K."/>
            <person name="Tiedje J."/>
        </authorList>
    </citation>
    <scope>NUCLEOTIDE SEQUENCE [LARGE SCALE GENOMIC DNA]</scope>
    <source>
        <strain>OS223</strain>
    </source>
</reference>
<dbReference type="EMBL" id="CP001252">
    <property type="protein sequence ID" value="ACK44593.1"/>
    <property type="molecule type" value="Genomic_DNA"/>
</dbReference>
<dbReference type="RefSeq" id="WP_006083777.1">
    <property type="nucleotide sequence ID" value="NC_011663.1"/>
</dbReference>
<dbReference type="SMR" id="B8E3F6"/>
<dbReference type="GeneID" id="11770417"/>
<dbReference type="KEGG" id="sbp:Sbal223_0049"/>
<dbReference type="HOGENOM" id="CLU_111574_1_0_6"/>
<dbReference type="Proteomes" id="UP000002507">
    <property type="component" value="Chromosome"/>
</dbReference>
<dbReference type="GO" id="GO:0005737">
    <property type="term" value="C:cytoplasm"/>
    <property type="evidence" value="ECO:0007669"/>
    <property type="project" value="UniProtKB-SubCell"/>
</dbReference>
<dbReference type="GO" id="GO:0051082">
    <property type="term" value="F:unfolded protein binding"/>
    <property type="evidence" value="ECO:0007669"/>
    <property type="project" value="InterPro"/>
</dbReference>
<dbReference type="GO" id="GO:0006457">
    <property type="term" value="P:protein folding"/>
    <property type="evidence" value="ECO:0007669"/>
    <property type="project" value="UniProtKB-UniRule"/>
</dbReference>
<dbReference type="GO" id="GO:0051262">
    <property type="term" value="P:protein tetramerization"/>
    <property type="evidence" value="ECO:0007669"/>
    <property type="project" value="InterPro"/>
</dbReference>
<dbReference type="GO" id="GO:0015031">
    <property type="term" value="P:protein transport"/>
    <property type="evidence" value="ECO:0007669"/>
    <property type="project" value="UniProtKB-UniRule"/>
</dbReference>
<dbReference type="Gene3D" id="3.10.420.10">
    <property type="entry name" value="SecB-like"/>
    <property type="match status" value="1"/>
</dbReference>
<dbReference type="HAMAP" id="MF_00821">
    <property type="entry name" value="SecB"/>
    <property type="match status" value="1"/>
</dbReference>
<dbReference type="InterPro" id="IPR003708">
    <property type="entry name" value="SecB"/>
</dbReference>
<dbReference type="InterPro" id="IPR035958">
    <property type="entry name" value="SecB-like_sf"/>
</dbReference>
<dbReference type="NCBIfam" id="NF004393">
    <property type="entry name" value="PRK05751.1-4"/>
    <property type="match status" value="1"/>
</dbReference>
<dbReference type="NCBIfam" id="TIGR00809">
    <property type="entry name" value="secB"/>
    <property type="match status" value="1"/>
</dbReference>
<dbReference type="PANTHER" id="PTHR36918">
    <property type="match status" value="1"/>
</dbReference>
<dbReference type="PANTHER" id="PTHR36918:SF1">
    <property type="entry name" value="PROTEIN-EXPORT PROTEIN SECB"/>
    <property type="match status" value="1"/>
</dbReference>
<dbReference type="Pfam" id="PF02556">
    <property type="entry name" value="SecB"/>
    <property type="match status" value="1"/>
</dbReference>
<dbReference type="PRINTS" id="PR01594">
    <property type="entry name" value="SECBCHAPRONE"/>
</dbReference>
<dbReference type="SUPFAM" id="SSF54611">
    <property type="entry name" value="SecB-like"/>
    <property type="match status" value="1"/>
</dbReference>
<evidence type="ECO:0000255" key="1">
    <source>
        <dbReference type="HAMAP-Rule" id="MF_00821"/>
    </source>
</evidence>
<comment type="function">
    <text evidence="1">One of the proteins required for the normal export of preproteins out of the cell cytoplasm. It is a molecular chaperone that binds to a subset of precursor proteins, maintaining them in a translocation-competent state. It also specifically binds to its receptor SecA.</text>
</comment>
<comment type="subunit">
    <text evidence="1">Homotetramer, a dimer of dimers. One homotetramer interacts with 1 SecA dimer.</text>
</comment>
<comment type="subcellular location">
    <subcellularLocation>
        <location evidence="1">Cytoplasm</location>
    </subcellularLocation>
</comment>
<comment type="similarity">
    <text evidence="1">Belongs to the SecB family.</text>
</comment>
<sequence length="161" mass="17483">MAEVANNEQQAPQFNIQRVYTKDVSFETPNSPAVFQKEWNPEVKLDLDTRSAKLADDVYEVVLSLTVTAQNGGDTAFLCEVQQAGIFSITGLTEPQLAHSLGAYCPNILFPYARETVGSLVGRGTFPQLNLAPVNFDALFAQYVQQRQAAATAPAAEEANA</sequence>
<feature type="chain" id="PRO_1000148709" description="Protein-export protein SecB">
    <location>
        <begin position="1"/>
        <end position="161"/>
    </location>
</feature>